<feature type="chain" id="PRO_1000001624" description="Recombination protein RecR">
    <location>
        <begin position="1"/>
        <end position="198"/>
    </location>
</feature>
<feature type="domain" description="Toprim" evidence="1">
    <location>
        <begin position="80"/>
        <end position="175"/>
    </location>
</feature>
<feature type="zinc finger region" description="C4-type" evidence="1">
    <location>
        <begin position="57"/>
        <end position="72"/>
    </location>
</feature>
<protein>
    <recommendedName>
        <fullName evidence="1">Recombination protein RecR</fullName>
    </recommendedName>
</protein>
<name>RECR_STRA1</name>
<accession>Q3K1U0</accession>
<comment type="function">
    <text evidence="1">May play a role in DNA repair. It seems to be involved in an RecBC-independent recombinational process of DNA repair. It may act with RecF and RecO.</text>
</comment>
<comment type="similarity">
    <text evidence="1">Belongs to the RecR family.</text>
</comment>
<proteinExistence type="inferred from homology"/>
<dbReference type="EMBL" id="CP000114">
    <property type="protein sequence ID" value="ABA45115.1"/>
    <property type="molecule type" value="Genomic_DNA"/>
</dbReference>
<dbReference type="RefSeq" id="WP_000966735.1">
    <property type="nucleotide sequence ID" value="NC_007432.1"/>
</dbReference>
<dbReference type="SMR" id="Q3K1U0"/>
<dbReference type="GeneID" id="66885718"/>
<dbReference type="KEGG" id="sak:SAK_0891"/>
<dbReference type="HOGENOM" id="CLU_060739_1_0_9"/>
<dbReference type="GO" id="GO:0003677">
    <property type="term" value="F:DNA binding"/>
    <property type="evidence" value="ECO:0007669"/>
    <property type="project" value="UniProtKB-UniRule"/>
</dbReference>
<dbReference type="GO" id="GO:0008270">
    <property type="term" value="F:zinc ion binding"/>
    <property type="evidence" value="ECO:0007669"/>
    <property type="project" value="UniProtKB-KW"/>
</dbReference>
<dbReference type="GO" id="GO:0006310">
    <property type="term" value="P:DNA recombination"/>
    <property type="evidence" value="ECO:0007669"/>
    <property type="project" value="UniProtKB-UniRule"/>
</dbReference>
<dbReference type="GO" id="GO:0006281">
    <property type="term" value="P:DNA repair"/>
    <property type="evidence" value="ECO:0007669"/>
    <property type="project" value="UniProtKB-UniRule"/>
</dbReference>
<dbReference type="CDD" id="cd01025">
    <property type="entry name" value="TOPRIM_recR"/>
    <property type="match status" value="1"/>
</dbReference>
<dbReference type="Gene3D" id="3.30.60.80">
    <property type="match status" value="1"/>
</dbReference>
<dbReference type="Gene3D" id="3.40.1360.10">
    <property type="match status" value="1"/>
</dbReference>
<dbReference type="Gene3D" id="6.10.250.240">
    <property type="match status" value="1"/>
</dbReference>
<dbReference type="Gene3D" id="1.10.8.420">
    <property type="entry name" value="RecR Domain 1"/>
    <property type="match status" value="1"/>
</dbReference>
<dbReference type="HAMAP" id="MF_00017">
    <property type="entry name" value="RecR"/>
    <property type="match status" value="1"/>
</dbReference>
<dbReference type="InterPro" id="IPR000093">
    <property type="entry name" value="DNA_Rcmb_RecR"/>
</dbReference>
<dbReference type="InterPro" id="IPR023627">
    <property type="entry name" value="Rcmb_RecR"/>
</dbReference>
<dbReference type="InterPro" id="IPR015967">
    <property type="entry name" value="Rcmb_RecR_Znf"/>
</dbReference>
<dbReference type="InterPro" id="IPR006171">
    <property type="entry name" value="TOPRIM_dom"/>
</dbReference>
<dbReference type="InterPro" id="IPR034137">
    <property type="entry name" value="TOPRIM_RecR"/>
</dbReference>
<dbReference type="NCBIfam" id="TIGR00615">
    <property type="entry name" value="recR"/>
    <property type="match status" value="1"/>
</dbReference>
<dbReference type="PANTHER" id="PTHR30446">
    <property type="entry name" value="RECOMBINATION PROTEIN RECR"/>
    <property type="match status" value="1"/>
</dbReference>
<dbReference type="PANTHER" id="PTHR30446:SF0">
    <property type="entry name" value="RECOMBINATION PROTEIN RECR"/>
    <property type="match status" value="1"/>
</dbReference>
<dbReference type="Pfam" id="PF21175">
    <property type="entry name" value="RecR_C"/>
    <property type="match status" value="1"/>
</dbReference>
<dbReference type="Pfam" id="PF21176">
    <property type="entry name" value="RecR_HhH"/>
    <property type="match status" value="1"/>
</dbReference>
<dbReference type="Pfam" id="PF02132">
    <property type="entry name" value="RecR_ZnF"/>
    <property type="match status" value="1"/>
</dbReference>
<dbReference type="Pfam" id="PF13662">
    <property type="entry name" value="Toprim_4"/>
    <property type="match status" value="1"/>
</dbReference>
<dbReference type="SMART" id="SM00493">
    <property type="entry name" value="TOPRIM"/>
    <property type="match status" value="1"/>
</dbReference>
<dbReference type="SUPFAM" id="SSF111304">
    <property type="entry name" value="Recombination protein RecR"/>
    <property type="match status" value="1"/>
</dbReference>
<dbReference type="PROSITE" id="PS01300">
    <property type="entry name" value="RECR"/>
    <property type="match status" value="1"/>
</dbReference>
<dbReference type="PROSITE" id="PS50880">
    <property type="entry name" value="TOPRIM"/>
    <property type="match status" value="1"/>
</dbReference>
<reference key="1">
    <citation type="journal article" date="2005" name="Proc. Natl. Acad. Sci. U.S.A.">
        <title>Genome analysis of multiple pathogenic isolates of Streptococcus agalactiae: implications for the microbial 'pan-genome'.</title>
        <authorList>
            <person name="Tettelin H."/>
            <person name="Masignani V."/>
            <person name="Cieslewicz M.J."/>
            <person name="Donati C."/>
            <person name="Medini D."/>
            <person name="Ward N.L."/>
            <person name="Angiuoli S.V."/>
            <person name="Crabtree J."/>
            <person name="Jones A.L."/>
            <person name="Durkin A.S."/>
            <person name="DeBoy R.T."/>
            <person name="Davidsen T.M."/>
            <person name="Mora M."/>
            <person name="Scarselli M."/>
            <person name="Margarit y Ros I."/>
            <person name="Peterson J.D."/>
            <person name="Hauser C.R."/>
            <person name="Sundaram J.P."/>
            <person name="Nelson W.C."/>
            <person name="Madupu R."/>
            <person name="Brinkac L.M."/>
            <person name="Dodson R.J."/>
            <person name="Rosovitz M.J."/>
            <person name="Sullivan S.A."/>
            <person name="Daugherty S.C."/>
            <person name="Haft D.H."/>
            <person name="Selengut J."/>
            <person name="Gwinn M.L."/>
            <person name="Zhou L."/>
            <person name="Zafar N."/>
            <person name="Khouri H."/>
            <person name="Radune D."/>
            <person name="Dimitrov G."/>
            <person name="Watkins K."/>
            <person name="O'Connor K.J."/>
            <person name="Smith S."/>
            <person name="Utterback T.R."/>
            <person name="White O."/>
            <person name="Rubens C.E."/>
            <person name="Grandi G."/>
            <person name="Madoff L.C."/>
            <person name="Kasper D.L."/>
            <person name="Telford J.L."/>
            <person name="Wessels M.R."/>
            <person name="Rappuoli R."/>
            <person name="Fraser C.M."/>
        </authorList>
    </citation>
    <scope>NUCLEOTIDE SEQUENCE [LARGE SCALE GENOMIC DNA]</scope>
    <source>
        <strain>ATCC 27591 / A909 / CDC SS700</strain>
    </source>
</reference>
<gene>
    <name evidence="1" type="primary">recR</name>
    <name type="ordered locus">SAK_0891</name>
</gene>
<evidence type="ECO:0000255" key="1">
    <source>
        <dbReference type="HAMAP-Rule" id="MF_00017"/>
    </source>
</evidence>
<keyword id="KW-0227">DNA damage</keyword>
<keyword id="KW-0233">DNA recombination</keyword>
<keyword id="KW-0234">DNA repair</keyword>
<keyword id="KW-0479">Metal-binding</keyword>
<keyword id="KW-0862">Zinc</keyword>
<keyword id="KW-0863">Zinc-finger</keyword>
<organism>
    <name type="scientific">Streptococcus agalactiae serotype Ia (strain ATCC 27591 / A909 / CDC SS700)</name>
    <dbReference type="NCBI Taxonomy" id="205921"/>
    <lineage>
        <taxon>Bacteria</taxon>
        <taxon>Bacillati</taxon>
        <taxon>Bacillota</taxon>
        <taxon>Bacilli</taxon>
        <taxon>Lactobacillales</taxon>
        <taxon>Streptococcaceae</taxon>
        <taxon>Streptococcus</taxon>
    </lineage>
</organism>
<sequence>MLYPTPIAKLIDSFSKLPGIGTKTATRLAFYTIGMSDEDVNEFAKNLLAAKRELTYCSVCGNLTDDDPCLICTDKTRDQSVILVVEDSKDVSAMEKIQEYNGLYHVLHGLISPMNGISPDDINLKSLITRLMDGQVTEVIVATNATADGEATSMYISRVLKPAGIKVTRLARGLAVGSDIEYADEVTLLRAIENRTEL</sequence>